<evidence type="ECO:0000255" key="1">
    <source>
        <dbReference type="HAMAP-Rule" id="MF_00595"/>
    </source>
</evidence>
<evidence type="ECO:0000256" key="2">
    <source>
        <dbReference type="SAM" id="MobiDB-lite"/>
    </source>
</evidence>
<sequence>MKSSGSARATRRNAVSSSSAPAHAEPPARRAAKPARKLDGAAARPLAPTNAASAKPQGRTREDKDRPLFEDIRYLGRLLGDVVREQEGDAVFDVVETIRQTAVKFRREDDKAAAQTLEKMLRKLTPEQTVSVVRAFSYFSHLANIAEDRHHNRRRRIHALAGSAAQAGTVAYALDKLKQAGDASSKTIKQFFEGALIVPVLTAHPTEVQRKSILDAQHDIARLLAERDQPLTARELAHNEALLRARVTTLWQTRMLRDARLTVADEIENALSYYRATFLDELPALYADIEEALAEHGLRARVPAFFQMGSWIGGDRDGNPNVTAATLDEAISRQAAVIFEHYLEQVHKLGAELSVSNLLVGASDALKALAAASPDQSPHRVDEPYRRALIGVYTRLAASARVRLGEGTVPVRSAGRGAAPVRATPYADAEEFAADLRVLTDSLALHHGESLATPRLAPLMRAAEVFGFHLASIDLRQSSDIHEAVVAELLARGGVEADYAALPEADKLRVLLAALADPRPLRSPYLDYSDLAKSELGVLERAHAIRAQFGARAVRNYIISHTETVSDLVEVLLLQKETGLFEGTLGTPHANARNGLMVIPLFETIADLRNASDIMRAFFALPGVGELLAHQGHEQEVMLGYSDSNKDGGFLTSNWELYRAELALVDLFDERGIKLRLFHGRGGTVGRGGGPTYQAILSQPPGTVNGQIRLTEQGEVIASKFANPEIGRRNLETVVAATLEATLAPHSNAPKQLPAFEAAMQTLSDAAMASYRALVYETPGFTDYFFSSTPITEIAELNIGSRPASRKLQDPKNRKIEDLRAIPWGFSWGQCRLLLTGWYGFGSAVAAYLDGAPDAAERGKRVALLKKMNKTWPFFANLLSNMDMVLAKTDLAVASRYAQLVADKKLRKHVFERIVAEWHRTADALAEITGAHARLAANPLLARSIKNRFPYLDPLNHLQVELIKRHRAGDTNARLRRGIHLTINGIAAGLRNTG</sequence>
<gene>
    <name evidence="1" type="primary">ppc</name>
    <name type="ordered locus">BMA0729</name>
</gene>
<accession>Q62LC1</accession>
<organism>
    <name type="scientific">Burkholderia mallei (strain ATCC 23344)</name>
    <dbReference type="NCBI Taxonomy" id="243160"/>
    <lineage>
        <taxon>Bacteria</taxon>
        <taxon>Pseudomonadati</taxon>
        <taxon>Pseudomonadota</taxon>
        <taxon>Betaproteobacteria</taxon>
        <taxon>Burkholderiales</taxon>
        <taxon>Burkholderiaceae</taxon>
        <taxon>Burkholderia</taxon>
        <taxon>pseudomallei group</taxon>
    </lineage>
</organism>
<name>CAPP_BURMA</name>
<dbReference type="EC" id="4.1.1.31" evidence="1"/>
<dbReference type="EMBL" id="CP000010">
    <property type="protein sequence ID" value="AAU49197.1"/>
    <property type="molecule type" value="Genomic_DNA"/>
</dbReference>
<dbReference type="RefSeq" id="WP_004191560.1">
    <property type="nucleotide sequence ID" value="NC_006348.1"/>
</dbReference>
<dbReference type="RefSeq" id="YP_102498.1">
    <property type="nucleotide sequence ID" value="NC_006348.1"/>
</dbReference>
<dbReference type="SMR" id="Q62LC1"/>
<dbReference type="GeneID" id="93059514"/>
<dbReference type="KEGG" id="bma:BMA0729"/>
<dbReference type="PATRIC" id="fig|243160.12.peg.747"/>
<dbReference type="eggNOG" id="COG2352">
    <property type="taxonomic scope" value="Bacteria"/>
</dbReference>
<dbReference type="HOGENOM" id="CLU_006557_2_0_4"/>
<dbReference type="Proteomes" id="UP000006693">
    <property type="component" value="Chromosome 1"/>
</dbReference>
<dbReference type="GO" id="GO:0005829">
    <property type="term" value="C:cytosol"/>
    <property type="evidence" value="ECO:0007669"/>
    <property type="project" value="TreeGrafter"/>
</dbReference>
<dbReference type="GO" id="GO:0000287">
    <property type="term" value="F:magnesium ion binding"/>
    <property type="evidence" value="ECO:0007669"/>
    <property type="project" value="UniProtKB-UniRule"/>
</dbReference>
<dbReference type="GO" id="GO:0008964">
    <property type="term" value="F:phosphoenolpyruvate carboxylase activity"/>
    <property type="evidence" value="ECO:0007669"/>
    <property type="project" value="UniProtKB-UniRule"/>
</dbReference>
<dbReference type="GO" id="GO:0015977">
    <property type="term" value="P:carbon fixation"/>
    <property type="evidence" value="ECO:0007669"/>
    <property type="project" value="UniProtKB-UniRule"/>
</dbReference>
<dbReference type="GO" id="GO:0006107">
    <property type="term" value="P:oxaloacetate metabolic process"/>
    <property type="evidence" value="ECO:0007669"/>
    <property type="project" value="UniProtKB-UniRule"/>
</dbReference>
<dbReference type="GO" id="GO:0006099">
    <property type="term" value="P:tricarboxylic acid cycle"/>
    <property type="evidence" value="ECO:0007669"/>
    <property type="project" value="InterPro"/>
</dbReference>
<dbReference type="Gene3D" id="1.20.1440.90">
    <property type="entry name" value="Phosphoenolpyruvate/pyruvate domain"/>
    <property type="match status" value="1"/>
</dbReference>
<dbReference type="HAMAP" id="MF_00595">
    <property type="entry name" value="PEPcase_type1"/>
    <property type="match status" value="1"/>
</dbReference>
<dbReference type="InterPro" id="IPR021135">
    <property type="entry name" value="PEP_COase"/>
</dbReference>
<dbReference type="InterPro" id="IPR022805">
    <property type="entry name" value="PEP_COase_bac/pln-type"/>
</dbReference>
<dbReference type="InterPro" id="IPR018129">
    <property type="entry name" value="PEP_COase_Lys_AS"/>
</dbReference>
<dbReference type="InterPro" id="IPR033129">
    <property type="entry name" value="PEPCASE_His_AS"/>
</dbReference>
<dbReference type="InterPro" id="IPR015813">
    <property type="entry name" value="Pyrv/PenolPyrv_kinase-like_dom"/>
</dbReference>
<dbReference type="NCBIfam" id="NF000584">
    <property type="entry name" value="PRK00009.1"/>
    <property type="match status" value="1"/>
</dbReference>
<dbReference type="PANTHER" id="PTHR30523">
    <property type="entry name" value="PHOSPHOENOLPYRUVATE CARBOXYLASE"/>
    <property type="match status" value="1"/>
</dbReference>
<dbReference type="PANTHER" id="PTHR30523:SF6">
    <property type="entry name" value="PHOSPHOENOLPYRUVATE CARBOXYLASE"/>
    <property type="match status" value="1"/>
</dbReference>
<dbReference type="Pfam" id="PF00311">
    <property type="entry name" value="PEPcase"/>
    <property type="match status" value="1"/>
</dbReference>
<dbReference type="PRINTS" id="PR00150">
    <property type="entry name" value="PEPCARBXLASE"/>
</dbReference>
<dbReference type="SUPFAM" id="SSF51621">
    <property type="entry name" value="Phosphoenolpyruvate/pyruvate domain"/>
    <property type="match status" value="1"/>
</dbReference>
<dbReference type="PROSITE" id="PS00781">
    <property type="entry name" value="PEPCASE_1"/>
    <property type="match status" value="1"/>
</dbReference>
<dbReference type="PROSITE" id="PS00393">
    <property type="entry name" value="PEPCASE_2"/>
    <property type="match status" value="1"/>
</dbReference>
<proteinExistence type="inferred from homology"/>
<comment type="function">
    <text evidence="1">Forms oxaloacetate, a four-carbon dicarboxylic acid source for the tricarboxylic acid cycle.</text>
</comment>
<comment type="catalytic activity">
    <reaction evidence="1">
        <text>oxaloacetate + phosphate = phosphoenolpyruvate + hydrogencarbonate</text>
        <dbReference type="Rhea" id="RHEA:28370"/>
        <dbReference type="ChEBI" id="CHEBI:16452"/>
        <dbReference type="ChEBI" id="CHEBI:17544"/>
        <dbReference type="ChEBI" id="CHEBI:43474"/>
        <dbReference type="ChEBI" id="CHEBI:58702"/>
        <dbReference type="EC" id="4.1.1.31"/>
    </reaction>
</comment>
<comment type="cofactor">
    <cofactor evidence="1">
        <name>Mg(2+)</name>
        <dbReference type="ChEBI" id="CHEBI:18420"/>
    </cofactor>
</comment>
<comment type="similarity">
    <text evidence="1">Belongs to the PEPCase type 1 family.</text>
</comment>
<feature type="chain" id="PRO_0000166584" description="Phosphoenolpyruvate carboxylase">
    <location>
        <begin position="1"/>
        <end position="994"/>
    </location>
</feature>
<feature type="region of interest" description="Disordered" evidence="2">
    <location>
        <begin position="1"/>
        <end position="66"/>
    </location>
</feature>
<feature type="compositionally biased region" description="Low complexity" evidence="2">
    <location>
        <begin position="14"/>
        <end position="25"/>
    </location>
</feature>
<feature type="compositionally biased region" description="Low complexity" evidence="2">
    <location>
        <begin position="41"/>
        <end position="54"/>
    </location>
</feature>
<feature type="active site" evidence="1">
    <location>
        <position position="204"/>
    </location>
</feature>
<feature type="active site" evidence="1">
    <location>
        <position position="646"/>
    </location>
</feature>
<keyword id="KW-0120">Carbon dioxide fixation</keyword>
<keyword id="KW-0456">Lyase</keyword>
<keyword id="KW-0460">Magnesium</keyword>
<keyword id="KW-1185">Reference proteome</keyword>
<protein>
    <recommendedName>
        <fullName evidence="1">Phosphoenolpyruvate carboxylase</fullName>
        <shortName evidence="1">PEPC</shortName>
        <shortName evidence="1">PEPCase</shortName>
        <ecNumber evidence="1">4.1.1.31</ecNumber>
    </recommendedName>
</protein>
<reference key="1">
    <citation type="journal article" date="2004" name="Proc. Natl. Acad. Sci. U.S.A.">
        <title>Structural flexibility in the Burkholderia mallei genome.</title>
        <authorList>
            <person name="Nierman W.C."/>
            <person name="DeShazer D."/>
            <person name="Kim H.S."/>
            <person name="Tettelin H."/>
            <person name="Nelson K.E."/>
            <person name="Feldblyum T.V."/>
            <person name="Ulrich R.L."/>
            <person name="Ronning C.M."/>
            <person name="Brinkac L.M."/>
            <person name="Daugherty S.C."/>
            <person name="Davidsen T.D."/>
            <person name="DeBoy R.T."/>
            <person name="Dimitrov G."/>
            <person name="Dodson R.J."/>
            <person name="Durkin A.S."/>
            <person name="Gwinn M.L."/>
            <person name="Haft D.H."/>
            <person name="Khouri H.M."/>
            <person name="Kolonay J.F."/>
            <person name="Madupu R."/>
            <person name="Mohammoud Y."/>
            <person name="Nelson W.C."/>
            <person name="Radune D."/>
            <person name="Romero C.M."/>
            <person name="Sarria S."/>
            <person name="Selengut J."/>
            <person name="Shamblin C."/>
            <person name="Sullivan S.A."/>
            <person name="White O."/>
            <person name="Yu Y."/>
            <person name="Zafar N."/>
            <person name="Zhou L."/>
            <person name="Fraser C.M."/>
        </authorList>
    </citation>
    <scope>NUCLEOTIDE SEQUENCE [LARGE SCALE GENOMIC DNA]</scope>
    <source>
        <strain>ATCC 23344</strain>
    </source>
</reference>